<feature type="chain" id="PRO_0000185607" description="Probable D-serine dehydratase">
    <location>
        <begin position="1"/>
        <end position="459"/>
    </location>
</feature>
<feature type="modified residue" description="N6-(pyridoxal phosphate)lysine" evidence="1">
    <location>
        <position position="119"/>
    </location>
</feature>
<organism>
    <name type="scientific">Geobacillus stearothermophilus</name>
    <name type="common">Bacillus stearothermophilus</name>
    <dbReference type="NCBI Taxonomy" id="1422"/>
    <lineage>
        <taxon>Bacteria</taxon>
        <taxon>Bacillati</taxon>
        <taxon>Bacillota</taxon>
        <taxon>Bacilli</taxon>
        <taxon>Bacillales</taxon>
        <taxon>Anoxybacillaceae</taxon>
        <taxon>Geobacillus</taxon>
    </lineage>
</organism>
<name>SDHD_GEOSE</name>
<reference key="1">
    <citation type="journal article" date="2004" name="Extremophiles">
        <title>Genomic characterization of thermophilic Geobacillus species isolated from the deepest sea mud of the Mariana Trench.</title>
        <authorList>
            <person name="Takami H."/>
            <person name="Nishi S."/>
            <person name="Lu J."/>
            <person name="Shimamura S."/>
            <person name="Takaki Y."/>
        </authorList>
    </citation>
    <scope>NUCLEOTIDE SEQUENCE [GENOMIC DNA]</scope>
    <source>
        <strain>HTA462</strain>
    </source>
</reference>
<evidence type="ECO:0000255" key="1">
    <source>
        <dbReference type="HAMAP-Rule" id="MF_01030"/>
    </source>
</evidence>
<gene>
    <name evidence="1" type="primary">dsdA</name>
    <name type="synonym">GSB10</name>
</gene>
<accession>Q75TH5</accession>
<keyword id="KW-0456">Lyase</keyword>
<keyword id="KW-0663">Pyridoxal phosphate</keyword>
<sequence length="459" mass="51196">MMTKNEIQKWVKEFPLLKTIMAAEEVFWRNPKYHAFAQAIRTIPLRERDVKEAEERLRRFAPYIAKAFPETRTAHGIIESPLVRISNMKQRLEKMFQTNIEGELLLKCDSHLPISGSIKARGGIYEVLKHAEDLALANGMITIGDDYAVMDSEKFRQFFSRYSLVVGSTGNLGLSIGIIGAKLGFRVTVHMSADAKQWKKDLLRSKGVTVIEHLTDYNKVVEEARRQSAEDPTSYFIDDENSIHLFLGYAVAAFRLKKQLEDMNITVDENHPLFVYLPCGVGGGPGGVTFGLKLVYGDHVHCFFAEPTHSPCMLLGLMTGEHDRVSVQDFGLDNKTEADGLAVGRPSRLVGNMLENVISGVYTVDDSTLYRLLAAMVETEEIYLEPSALAGVAGPVRLFRDLAGQTYVEANGLKEKMKNATHIGWATGGSMVPKDVMEAYYREGVRIETMTGNGFSEGR</sequence>
<protein>
    <recommendedName>
        <fullName evidence="1">Probable D-serine dehydratase</fullName>
        <ecNumber evidence="1">4.3.1.18</ecNumber>
    </recommendedName>
    <alternativeName>
        <fullName evidence="1">D-serine deaminase</fullName>
        <shortName evidence="1">DSD</shortName>
    </alternativeName>
</protein>
<comment type="catalytic activity">
    <reaction evidence="1">
        <text>D-serine = pyruvate + NH4(+)</text>
        <dbReference type="Rhea" id="RHEA:13977"/>
        <dbReference type="ChEBI" id="CHEBI:15361"/>
        <dbReference type="ChEBI" id="CHEBI:28938"/>
        <dbReference type="ChEBI" id="CHEBI:35247"/>
        <dbReference type="EC" id="4.3.1.18"/>
    </reaction>
</comment>
<comment type="cofactor">
    <cofactor evidence="1">
        <name>pyridoxal 5'-phosphate</name>
        <dbReference type="ChEBI" id="CHEBI:597326"/>
    </cofactor>
</comment>
<comment type="similarity">
    <text evidence="1">Belongs to the serine/threonine dehydratase family. DsdA subfamily.</text>
</comment>
<dbReference type="EC" id="4.3.1.18" evidence="1"/>
<dbReference type="EMBL" id="AB126616">
    <property type="protein sequence ID" value="BAD18303.1"/>
    <property type="molecule type" value="Genomic_DNA"/>
</dbReference>
<dbReference type="SMR" id="Q75TH5"/>
<dbReference type="GO" id="GO:0008721">
    <property type="term" value="F:D-serine ammonia-lyase activity"/>
    <property type="evidence" value="ECO:0007669"/>
    <property type="project" value="UniProtKB-EC"/>
</dbReference>
<dbReference type="GO" id="GO:0016836">
    <property type="term" value="F:hydro-lyase activity"/>
    <property type="evidence" value="ECO:0007669"/>
    <property type="project" value="UniProtKB-UniRule"/>
</dbReference>
<dbReference type="GO" id="GO:0030170">
    <property type="term" value="F:pyridoxal phosphate binding"/>
    <property type="evidence" value="ECO:0007669"/>
    <property type="project" value="InterPro"/>
</dbReference>
<dbReference type="GO" id="GO:0036088">
    <property type="term" value="P:D-serine catabolic process"/>
    <property type="evidence" value="ECO:0007669"/>
    <property type="project" value="TreeGrafter"/>
</dbReference>
<dbReference type="GO" id="GO:0009097">
    <property type="term" value="P:isoleucine biosynthetic process"/>
    <property type="evidence" value="ECO:0007669"/>
    <property type="project" value="TreeGrafter"/>
</dbReference>
<dbReference type="CDD" id="cd06447">
    <property type="entry name" value="D-Ser-dehyd"/>
    <property type="match status" value="1"/>
</dbReference>
<dbReference type="Gene3D" id="3.40.50.1100">
    <property type="match status" value="2"/>
</dbReference>
<dbReference type="HAMAP" id="MF_01030">
    <property type="entry name" value="D_Ser_dehydrat"/>
    <property type="match status" value="1"/>
</dbReference>
<dbReference type="InterPro" id="IPR011780">
    <property type="entry name" value="D_Ser_am_lyase"/>
</dbReference>
<dbReference type="InterPro" id="IPR050147">
    <property type="entry name" value="Ser/Thr_Dehydratase"/>
</dbReference>
<dbReference type="InterPro" id="IPR000634">
    <property type="entry name" value="Ser/Thr_deHydtase_PyrdxlP-BS"/>
</dbReference>
<dbReference type="InterPro" id="IPR001926">
    <property type="entry name" value="TrpB-like_PALP"/>
</dbReference>
<dbReference type="InterPro" id="IPR036052">
    <property type="entry name" value="TrpB-like_PALP_sf"/>
</dbReference>
<dbReference type="NCBIfam" id="TIGR02035">
    <property type="entry name" value="D_Ser_am_lyase"/>
    <property type="match status" value="1"/>
</dbReference>
<dbReference type="NCBIfam" id="NF002823">
    <property type="entry name" value="PRK02991.1"/>
    <property type="match status" value="1"/>
</dbReference>
<dbReference type="PANTHER" id="PTHR48078:SF9">
    <property type="entry name" value="D-SERINE DEHYDRATASE"/>
    <property type="match status" value="1"/>
</dbReference>
<dbReference type="PANTHER" id="PTHR48078">
    <property type="entry name" value="THREONINE DEHYDRATASE, MITOCHONDRIAL-RELATED"/>
    <property type="match status" value="1"/>
</dbReference>
<dbReference type="Pfam" id="PF00291">
    <property type="entry name" value="PALP"/>
    <property type="match status" value="1"/>
</dbReference>
<dbReference type="SUPFAM" id="SSF53686">
    <property type="entry name" value="Tryptophan synthase beta subunit-like PLP-dependent enzymes"/>
    <property type="match status" value="1"/>
</dbReference>
<dbReference type="PROSITE" id="PS00165">
    <property type="entry name" value="DEHYDRATASE_SER_THR"/>
    <property type="match status" value="1"/>
</dbReference>
<proteinExistence type="inferred from homology"/>